<accession>P0C092</accession>
<name>CSEN4_MOUSE</name>
<proteinExistence type="evidence at transcript level"/>
<protein>
    <recommendedName>
        <fullName>Calsenilin isoform 4</fullName>
    </recommendedName>
</protein>
<comment type="function">
    <text>Unknown for isoform 4. Csen is involved in calcium-dependent transcriptional repression, regulation of potassium channels, and perhaps in processing of PSEN2 and apoptosis.</text>
</comment>
<comment type="alternative products">
    <event type="alternative splicing"/>
    <isoform>
        <id>P0C092-1</id>
        <name>4</name>
        <name>DREAM T+</name>
        <sequence type="displayed"/>
    </isoform>
    <isoform>
        <id>Q9QXT8-1</id>
        <name>1</name>
        <name>Calsenilin/KChIP3 T+</name>
        <sequence type="external"/>
    </isoform>
    <isoform>
        <id>Q9QXT8-2</id>
        <name>2</name>
        <name>Calsenilin/KChIP3 T-</name>
        <sequence type="external"/>
    </isoform>
    <isoform>
        <id>Q9QXT8-3</id>
        <name>3</name>
        <name>DREAM T-</name>
        <sequence type="external"/>
    </isoform>
</comment>
<comment type="tissue specificity">
    <text evidence="2">Isoform 1 or isoform 4 (T+ forms) are expressed at equal levels with isoform 2 or isoform 3 (T- forms) in brain.</text>
</comment>
<comment type="miscellaneous">
    <molecule>Isoform 4</molecule>
    <text>Lacks EF-hand domains.</text>
</comment>
<reference key="1">
    <citation type="journal article" date="2001" name="Mol. Cell. Neurosci.">
        <title>Mouse DREAM/calsenilin/KChIP3: gene structure, coding potential and expression.</title>
        <authorList>
            <person name="Spreafico F."/>
            <person name="Barski J.J."/>
            <person name="Farina C."/>
            <person name="Meyer M."/>
        </authorList>
    </citation>
    <scope>NUCLEOTIDE SEQUENCE [MRNA] (ISOFORM 4)</scope>
    <scope>NUCLEOTIDE SEQUENCE [GENOMIC DNA]</scope>
    <scope>TISSUE SPECIFICITY</scope>
</reference>
<feature type="chain" id="PRO_0000073816" description="Calsenilin isoform 4">
    <location>
        <begin position="1"/>
        <end position="89"/>
    </location>
</feature>
<feature type="region of interest" description="Disordered" evidence="1">
    <location>
        <begin position="27"/>
        <end position="57"/>
    </location>
</feature>
<organism>
    <name type="scientific">Mus musculus</name>
    <name type="common">Mouse</name>
    <dbReference type="NCBI Taxonomy" id="10090"/>
    <lineage>
        <taxon>Eukaryota</taxon>
        <taxon>Metazoa</taxon>
        <taxon>Chordata</taxon>
        <taxon>Craniata</taxon>
        <taxon>Vertebrata</taxon>
        <taxon>Euteleostomi</taxon>
        <taxon>Mammalia</taxon>
        <taxon>Eutheria</taxon>
        <taxon>Euarchontoglires</taxon>
        <taxon>Glires</taxon>
        <taxon>Rodentia</taxon>
        <taxon>Myomorpha</taxon>
        <taxon>Muroidea</taxon>
        <taxon>Muridae</taxon>
        <taxon>Murinae</taxon>
        <taxon>Mus</taxon>
        <taxon>Mus</taxon>
    </lineage>
</organism>
<gene>
    <name type="primary">Kcnip3</name>
    <name type="synonym">Csen</name>
    <name type="synonym">Dream</name>
    <name type="synonym">Kchip3</name>
</gene>
<sequence>MRQLPAGPSSLACSGCKAGRLVTVPFSSRDAEDQGSREGIGWQPPGRSWAHTTEQEGKHQVAKATVHPPGPDALLLNQVDPVQCCPTRL</sequence>
<dbReference type="EMBL" id="AF287737">
    <property type="status" value="NOT_ANNOTATED_CDS"/>
    <property type="molecule type" value="Genomic_DNA"/>
</dbReference>
<dbReference type="SwissPalm" id="P0C092"/>
<dbReference type="ProteomicsDB" id="285342">
    <molecule id="P0C092-1"/>
</dbReference>
<dbReference type="AGR" id="MGI:1929258"/>
<dbReference type="MGI" id="MGI:1929258">
    <property type="gene designation" value="Kcnip3"/>
</dbReference>
<dbReference type="ChiTaRS" id="Kcnip3">
    <property type="organism name" value="mouse"/>
</dbReference>
<dbReference type="Proteomes" id="UP000000589">
    <property type="component" value="Unplaced"/>
</dbReference>
<dbReference type="GO" id="GO:0005829">
    <property type="term" value="C:cytosol"/>
    <property type="evidence" value="ECO:0000314"/>
    <property type="project" value="MGI"/>
</dbReference>
<dbReference type="GO" id="GO:0005654">
    <property type="term" value="C:nucleoplasm"/>
    <property type="evidence" value="ECO:0000304"/>
    <property type="project" value="Reactome"/>
</dbReference>
<dbReference type="GO" id="GO:0005634">
    <property type="term" value="C:nucleus"/>
    <property type="evidence" value="ECO:0000314"/>
    <property type="project" value="MGI"/>
</dbReference>
<dbReference type="GO" id="GO:0048306">
    <property type="term" value="F:calcium-dependent protein binding"/>
    <property type="evidence" value="ECO:0000353"/>
    <property type="project" value="MGI"/>
</dbReference>
<dbReference type="GO" id="GO:0003677">
    <property type="term" value="F:DNA binding"/>
    <property type="evidence" value="ECO:0000314"/>
    <property type="project" value="MGI"/>
</dbReference>
<dbReference type="GO" id="GO:0048266">
    <property type="term" value="P:behavioral response to pain"/>
    <property type="evidence" value="ECO:0000315"/>
    <property type="project" value="MGI"/>
</dbReference>
<dbReference type="GO" id="GO:0045892">
    <property type="term" value="P:negative regulation of DNA-templated transcription"/>
    <property type="evidence" value="ECO:0000304"/>
    <property type="project" value="MGI"/>
</dbReference>
<dbReference type="GO" id="GO:0000122">
    <property type="term" value="P:negative regulation of transcription by RNA polymerase II"/>
    <property type="evidence" value="ECO:0000315"/>
    <property type="project" value="MGI"/>
</dbReference>
<dbReference type="GO" id="GO:0006813">
    <property type="term" value="P:potassium ion transport"/>
    <property type="evidence" value="ECO:0000304"/>
    <property type="project" value="MGI"/>
</dbReference>
<dbReference type="GO" id="GO:0043523">
    <property type="term" value="P:regulation of neuron apoptotic process"/>
    <property type="evidence" value="ECO:0000314"/>
    <property type="project" value="MGI"/>
</dbReference>
<dbReference type="GO" id="GO:0048265">
    <property type="term" value="P:response to pain"/>
    <property type="evidence" value="ECO:0000315"/>
    <property type="project" value="MGI"/>
</dbReference>
<dbReference type="GO" id="GO:0019233">
    <property type="term" value="P:sensory perception of pain"/>
    <property type="evidence" value="ECO:0000315"/>
    <property type="project" value="MGI"/>
</dbReference>
<keyword id="KW-0025">Alternative splicing</keyword>
<keyword id="KW-1185">Reference proteome</keyword>
<evidence type="ECO:0000256" key="1">
    <source>
        <dbReference type="SAM" id="MobiDB-lite"/>
    </source>
</evidence>
<evidence type="ECO:0000269" key="2">
    <source>
    </source>
</evidence>